<keyword id="KW-0119">Carbohydrate metabolism</keyword>
<keyword id="KW-0963">Cytoplasm</keyword>
<keyword id="KW-0413">Isomerase</keyword>
<evidence type="ECO:0000255" key="1">
    <source>
        <dbReference type="HAMAP-Rule" id="MF_01661"/>
    </source>
</evidence>
<feature type="chain" id="PRO_0000346300" description="D-ribose pyranase">
    <location>
        <begin position="1"/>
        <end position="139"/>
    </location>
</feature>
<feature type="active site" description="Proton donor" evidence="1">
    <location>
        <position position="20"/>
    </location>
</feature>
<feature type="binding site" evidence="1">
    <location>
        <position position="28"/>
    </location>
    <ligand>
        <name>substrate</name>
    </ligand>
</feature>
<feature type="binding site" evidence="1">
    <location>
        <position position="106"/>
    </location>
    <ligand>
        <name>substrate</name>
    </ligand>
</feature>
<feature type="binding site" evidence="1">
    <location>
        <begin position="128"/>
        <end position="130"/>
    </location>
    <ligand>
        <name>substrate</name>
    </ligand>
</feature>
<organism>
    <name type="scientific">Yersinia enterocolitica serotype O:8 / biotype 1B (strain NCTC 13174 / 8081)</name>
    <dbReference type="NCBI Taxonomy" id="393305"/>
    <lineage>
        <taxon>Bacteria</taxon>
        <taxon>Pseudomonadati</taxon>
        <taxon>Pseudomonadota</taxon>
        <taxon>Gammaproteobacteria</taxon>
        <taxon>Enterobacterales</taxon>
        <taxon>Yersiniaceae</taxon>
        <taxon>Yersinia</taxon>
    </lineage>
</organism>
<name>RBSD_YERE8</name>
<dbReference type="EC" id="5.4.99.62" evidence="1"/>
<dbReference type="EMBL" id="AM286415">
    <property type="protein sequence ID" value="CAL10153.1"/>
    <property type="molecule type" value="Genomic_DNA"/>
</dbReference>
<dbReference type="RefSeq" id="WP_005161210.1">
    <property type="nucleotide sequence ID" value="NC_008800.1"/>
</dbReference>
<dbReference type="RefSeq" id="YP_001004405.1">
    <property type="nucleotide sequence ID" value="NC_008800.1"/>
</dbReference>
<dbReference type="SMR" id="A1JHR8"/>
<dbReference type="GeneID" id="31410927"/>
<dbReference type="KEGG" id="yen:YE0008"/>
<dbReference type="PATRIC" id="fig|393305.7.peg.97"/>
<dbReference type="eggNOG" id="COG1869">
    <property type="taxonomic scope" value="Bacteria"/>
</dbReference>
<dbReference type="HOGENOM" id="CLU_135498_0_0_6"/>
<dbReference type="OrthoDB" id="9805009at2"/>
<dbReference type="UniPathway" id="UPA00916">
    <property type="reaction ID" value="UER00888"/>
</dbReference>
<dbReference type="Proteomes" id="UP000000642">
    <property type="component" value="Chromosome"/>
</dbReference>
<dbReference type="GO" id="GO:0005829">
    <property type="term" value="C:cytosol"/>
    <property type="evidence" value="ECO:0007669"/>
    <property type="project" value="TreeGrafter"/>
</dbReference>
<dbReference type="GO" id="GO:0062193">
    <property type="term" value="F:D-ribose pyranase activity"/>
    <property type="evidence" value="ECO:0007669"/>
    <property type="project" value="UniProtKB-EC"/>
</dbReference>
<dbReference type="GO" id="GO:0016872">
    <property type="term" value="F:intramolecular lyase activity"/>
    <property type="evidence" value="ECO:0007669"/>
    <property type="project" value="UniProtKB-UniRule"/>
</dbReference>
<dbReference type="GO" id="GO:0048029">
    <property type="term" value="F:monosaccharide binding"/>
    <property type="evidence" value="ECO:0007669"/>
    <property type="project" value="InterPro"/>
</dbReference>
<dbReference type="GO" id="GO:0019303">
    <property type="term" value="P:D-ribose catabolic process"/>
    <property type="evidence" value="ECO:0007669"/>
    <property type="project" value="UniProtKB-UniRule"/>
</dbReference>
<dbReference type="FunFam" id="3.40.1650.10:FF:000002">
    <property type="entry name" value="D-ribose pyranase"/>
    <property type="match status" value="1"/>
</dbReference>
<dbReference type="Gene3D" id="3.40.1650.10">
    <property type="entry name" value="RbsD-like domain"/>
    <property type="match status" value="1"/>
</dbReference>
<dbReference type="HAMAP" id="MF_01661">
    <property type="entry name" value="D_rib_pyranase"/>
    <property type="match status" value="1"/>
</dbReference>
<dbReference type="InterPro" id="IPR023064">
    <property type="entry name" value="D-ribose_pyranase"/>
</dbReference>
<dbReference type="InterPro" id="IPR023750">
    <property type="entry name" value="RbsD-like_sf"/>
</dbReference>
<dbReference type="InterPro" id="IPR007721">
    <property type="entry name" value="RbsD_FucU"/>
</dbReference>
<dbReference type="NCBIfam" id="NF008761">
    <property type="entry name" value="PRK11797.1"/>
    <property type="match status" value="1"/>
</dbReference>
<dbReference type="PANTHER" id="PTHR37831">
    <property type="entry name" value="D-RIBOSE PYRANASE"/>
    <property type="match status" value="1"/>
</dbReference>
<dbReference type="PANTHER" id="PTHR37831:SF1">
    <property type="entry name" value="D-RIBOSE PYRANASE"/>
    <property type="match status" value="1"/>
</dbReference>
<dbReference type="Pfam" id="PF05025">
    <property type="entry name" value="RbsD_FucU"/>
    <property type="match status" value="1"/>
</dbReference>
<dbReference type="SUPFAM" id="SSF102546">
    <property type="entry name" value="RbsD-like"/>
    <property type="match status" value="1"/>
</dbReference>
<comment type="function">
    <text evidence="1">Catalyzes the interconversion of beta-pyran and beta-furan forms of D-ribose.</text>
</comment>
<comment type="catalytic activity">
    <reaction evidence="1">
        <text>beta-D-ribopyranose = beta-D-ribofuranose</text>
        <dbReference type="Rhea" id="RHEA:25432"/>
        <dbReference type="ChEBI" id="CHEBI:27476"/>
        <dbReference type="ChEBI" id="CHEBI:47002"/>
        <dbReference type="EC" id="5.4.99.62"/>
    </reaction>
</comment>
<comment type="pathway">
    <text evidence="1">Carbohydrate metabolism; D-ribose degradation; D-ribose 5-phosphate from beta-D-ribopyranose: step 1/2.</text>
</comment>
<comment type="subunit">
    <text evidence="1">Homodecamer.</text>
</comment>
<comment type="subcellular location">
    <subcellularLocation>
        <location evidence="1">Cytoplasm</location>
    </subcellularLocation>
</comment>
<comment type="similarity">
    <text evidence="1">Belongs to the RbsD / FucU family. RbsD subfamily.</text>
</comment>
<sequence>MKKGALLNSDISAVISRLGHTDQIVIGDAGLPIPATTTRIDLALTQGVPGFLQVFEVVTQEMQVESAYLAQEIVKNNPQLHETLLAQLSQLEQHQGNQIALHYISHEAFKEQTKQSRAVIRSGECSPFANIILCSGVTF</sequence>
<accession>A1JHR8</accession>
<protein>
    <recommendedName>
        <fullName evidence="1">D-ribose pyranase</fullName>
        <ecNumber evidence="1">5.4.99.62</ecNumber>
    </recommendedName>
</protein>
<gene>
    <name evidence="1" type="primary">rbsD</name>
    <name type="ordered locus">YE0008</name>
</gene>
<proteinExistence type="inferred from homology"/>
<reference key="1">
    <citation type="journal article" date="2006" name="PLoS Genet.">
        <title>The complete genome sequence and comparative genome analysis of the high pathogenicity Yersinia enterocolitica strain 8081.</title>
        <authorList>
            <person name="Thomson N.R."/>
            <person name="Howard S."/>
            <person name="Wren B.W."/>
            <person name="Holden M.T.G."/>
            <person name="Crossman L."/>
            <person name="Challis G.L."/>
            <person name="Churcher C."/>
            <person name="Mungall K."/>
            <person name="Brooks K."/>
            <person name="Chillingworth T."/>
            <person name="Feltwell T."/>
            <person name="Abdellah Z."/>
            <person name="Hauser H."/>
            <person name="Jagels K."/>
            <person name="Maddison M."/>
            <person name="Moule S."/>
            <person name="Sanders M."/>
            <person name="Whitehead S."/>
            <person name="Quail M.A."/>
            <person name="Dougan G."/>
            <person name="Parkhill J."/>
            <person name="Prentice M.B."/>
        </authorList>
    </citation>
    <scope>NUCLEOTIDE SEQUENCE [LARGE SCALE GENOMIC DNA]</scope>
    <source>
        <strain>NCTC 13174 / 8081</strain>
    </source>
</reference>